<evidence type="ECO:0000255" key="1">
    <source>
        <dbReference type="HAMAP-Rule" id="MF_00281"/>
    </source>
</evidence>
<dbReference type="EC" id="6.1.1.20" evidence="1"/>
<dbReference type="EMBL" id="CR936503">
    <property type="protein sequence ID" value="CAI55680.1"/>
    <property type="molecule type" value="Genomic_DNA"/>
</dbReference>
<dbReference type="RefSeq" id="WP_011375071.1">
    <property type="nucleotide sequence ID" value="NC_007576.1"/>
</dbReference>
<dbReference type="SMR" id="Q38VV3"/>
<dbReference type="STRING" id="314315.LCA_1376"/>
<dbReference type="KEGG" id="lsa:LCA_1376"/>
<dbReference type="eggNOG" id="COG0016">
    <property type="taxonomic scope" value="Bacteria"/>
</dbReference>
<dbReference type="HOGENOM" id="CLU_025086_0_1_9"/>
<dbReference type="OrthoDB" id="9800719at2"/>
<dbReference type="Proteomes" id="UP000002707">
    <property type="component" value="Chromosome"/>
</dbReference>
<dbReference type="GO" id="GO:0005737">
    <property type="term" value="C:cytoplasm"/>
    <property type="evidence" value="ECO:0007669"/>
    <property type="project" value="UniProtKB-SubCell"/>
</dbReference>
<dbReference type="GO" id="GO:0005524">
    <property type="term" value="F:ATP binding"/>
    <property type="evidence" value="ECO:0007669"/>
    <property type="project" value="UniProtKB-UniRule"/>
</dbReference>
<dbReference type="GO" id="GO:0140096">
    <property type="term" value="F:catalytic activity, acting on a protein"/>
    <property type="evidence" value="ECO:0007669"/>
    <property type="project" value="UniProtKB-ARBA"/>
</dbReference>
<dbReference type="GO" id="GO:0000287">
    <property type="term" value="F:magnesium ion binding"/>
    <property type="evidence" value="ECO:0007669"/>
    <property type="project" value="UniProtKB-UniRule"/>
</dbReference>
<dbReference type="GO" id="GO:0004826">
    <property type="term" value="F:phenylalanine-tRNA ligase activity"/>
    <property type="evidence" value="ECO:0007669"/>
    <property type="project" value="UniProtKB-UniRule"/>
</dbReference>
<dbReference type="GO" id="GO:0016740">
    <property type="term" value="F:transferase activity"/>
    <property type="evidence" value="ECO:0007669"/>
    <property type="project" value="UniProtKB-ARBA"/>
</dbReference>
<dbReference type="GO" id="GO:0000049">
    <property type="term" value="F:tRNA binding"/>
    <property type="evidence" value="ECO:0007669"/>
    <property type="project" value="InterPro"/>
</dbReference>
<dbReference type="GO" id="GO:0006432">
    <property type="term" value="P:phenylalanyl-tRNA aminoacylation"/>
    <property type="evidence" value="ECO:0007669"/>
    <property type="project" value="UniProtKB-UniRule"/>
</dbReference>
<dbReference type="CDD" id="cd00496">
    <property type="entry name" value="PheRS_alpha_core"/>
    <property type="match status" value="1"/>
</dbReference>
<dbReference type="FunFam" id="3.30.930.10:FF:000003">
    <property type="entry name" value="Phenylalanine--tRNA ligase alpha subunit"/>
    <property type="match status" value="1"/>
</dbReference>
<dbReference type="Gene3D" id="3.30.930.10">
    <property type="entry name" value="Bira Bifunctional Protein, Domain 2"/>
    <property type="match status" value="1"/>
</dbReference>
<dbReference type="HAMAP" id="MF_00281">
    <property type="entry name" value="Phe_tRNA_synth_alpha1"/>
    <property type="match status" value="1"/>
</dbReference>
<dbReference type="InterPro" id="IPR006195">
    <property type="entry name" value="aa-tRNA-synth_II"/>
</dbReference>
<dbReference type="InterPro" id="IPR045864">
    <property type="entry name" value="aa-tRNA-synth_II/BPL/LPL"/>
</dbReference>
<dbReference type="InterPro" id="IPR004529">
    <property type="entry name" value="Phe-tRNA-synth_IIc_asu"/>
</dbReference>
<dbReference type="InterPro" id="IPR004188">
    <property type="entry name" value="Phe-tRNA_ligase_II_N"/>
</dbReference>
<dbReference type="InterPro" id="IPR022911">
    <property type="entry name" value="Phe_tRNA_ligase_alpha1_bac"/>
</dbReference>
<dbReference type="InterPro" id="IPR002319">
    <property type="entry name" value="Phenylalanyl-tRNA_Synthase"/>
</dbReference>
<dbReference type="InterPro" id="IPR010978">
    <property type="entry name" value="tRNA-bd_arm"/>
</dbReference>
<dbReference type="NCBIfam" id="TIGR00468">
    <property type="entry name" value="pheS"/>
    <property type="match status" value="1"/>
</dbReference>
<dbReference type="PANTHER" id="PTHR11538:SF41">
    <property type="entry name" value="PHENYLALANINE--TRNA LIGASE, MITOCHONDRIAL"/>
    <property type="match status" value="1"/>
</dbReference>
<dbReference type="PANTHER" id="PTHR11538">
    <property type="entry name" value="PHENYLALANYL-TRNA SYNTHETASE"/>
    <property type="match status" value="1"/>
</dbReference>
<dbReference type="Pfam" id="PF02912">
    <property type="entry name" value="Phe_tRNA-synt_N"/>
    <property type="match status" value="1"/>
</dbReference>
<dbReference type="Pfam" id="PF01409">
    <property type="entry name" value="tRNA-synt_2d"/>
    <property type="match status" value="1"/>
</dbReference>
<dbReference type="SUPFAM" id="SSF55681">
    <property type="entry name" value="Class II aaRS and biotin synthetases"/>
    <property type="match status" value="1"/>
</dbReference>
<dbReference type="SUPFAM" id="SSF46589">
    <property type="entry name" value="tRNA-binding arm"/>
    <property type="match status" value="1"/>
</dbReference>
<dbReference type="PROSITE" id="PS50862">
    <property type="entry name" value="AA_TRNA_LIGASE_II"/>
    <property type="match status" value="1"/>
</dbReference>
<name>SYFA_LATSS</name>
<organism>
    <name type="scientific">Latilactobacillus sakei subsp. sakei (strain 23K)</name>
    <name type="common">Lactobacillus sakei subsp. sakei</name>
    <dbReference type="NCBI Taxonomy" id="314315"/>
    <lineage>
        <taxon>Bacteria</taxon>
        <taxon>Bacillati</taxon>
        <taxon>Bacillota</taxon>
        <taxon>Bacilli</taxon>
        <taxon>Lactobacillales</taxon>
        <taxon>Lactobacillaceae</taxon>
        <taxon>Latilactobacillus</taxon>
    </lineage>
</organism>
<accession>Q38VV3</accession>
<proteinExistence type="inferred from homology"/>
<sequence length="348" mass="39369">MSLKEQLEHLQQKSLQDIQKVVDLDALNQIRVEVLGKKGPITEVLRGMRDLSNEERPKVGAFANEIKSDLAQAIEARKAELEAKKEAAQLAHETIDVTLPGQPVKKGTPHVLTQVIDDLEDLFIGMGYQVVAGFEVEDEKHNFEMLNMPADHPARDMQDTFYITKDTLMRTHMSPNEARDLESHDFANGPIKMISPGRVYRRDTDDATHSHQFYQMEGQVIDKNITMADLKGTLEYTIHHIFGEDRDLRFRPSYFPFTEPSVEVDISCFRCNGEGCSVCKQTGWIEVLGAGMTHPNVLKAGGVDPEVYGGFAFGLGIDRFAMLKYGVDDIRNFYLNDVRFLNQFTQEV</sequence>
<reference key="1">
    <citation type="journal article" date="2005" name="Nat. Biotechnol.">
        <title>The complete genome sequence of the meat-borne lactic acid bacterium Lactobacillus sakei 23K.</title>
        <authorList>
            <person name="Chaillou S."/>
            <person name="Champomier-Verges M.-C."/>
            <person name="Cornet M."/>
            <person name="Crutz-Le Coq A.-M."/>
            <person name="Dudez A.-M."/>
            <person name="Martin V."/>
            <person name="Beaufils S."/>
            <person name="Darbon-Rongere E."/>
            <person name="Bossy R."/>
            <person name="Loux V."/>
            <person name="Zagorec M."/>
        </authorList>
    </citation>
    <scope>NUCLEOTIDE SEQUENCE [LARGE SCALE GENOMIC DNA]</scope>
    <source>
        <strain>23K</strain>
    </source>
</reference>
<gene>
    <name evidence="1" type="primary">pheS</name>
    <name type="ordered locus">LCA_1376</name>
</gene>
<keyword id="KW-0030">Aminoacyl-tRNA synthetase</keyword>
<keyword id="KW-0067">ATP-binding</keyword>
<keyword id="KW-0963">Cytoplasm</keyword>
<keyword id="KW-0436">Ligase</keyword>
<keyword id="KW-0460">Magnesium</keyword>
<keyword id="KW-0479">Metal-binding</keyword>
<keyword id="KW-0547">Nucleotide-binding</keyword>
<keyword id="KW-0648">Protein biosynthesis</keyword>
<keyword id="KW-1185">Reference proteome</keyword>
<feature type="chain" id="PRO_0000231988" description="Phenylalanine--tRNA ligase alpha subunit">
    <location>
        <begin position="1"/>
        <end position="348"/>
    </location>
</feature>
<feature type="binding site" evidence="1">
    <location>
        <position position="259"/>
    </location>
    <ligand>
        <name>Mg(2+)</name>
        <dbReference type="ChEBI" id="CHEBI:18420"/>
        <note>shared with beta subunit</note>
    </ligand>
</feature>
<comment type="catalytic activity">
    <reaction evidence="1">
        <text>tRNA(Phe) + L-phenylalanine + ATP = L-phenylalanyl-tRNA(Phe) + AMP + diphosphate + H(+)</text>
        <dbReference type="Rhea" id="RHEA:19413"/>
        <dbReference type="Rhea" id="RHEA-COMP:9668"/>
        <dbReference type="Rhea" id="RHEA-COMP:9699"/>
        <dbReference type="ChEBI" id="CHEBI:15378"/>
        <dbReference type="ChEBI" id="CHEBI:30616"/>
        <dbReference type="ChEBI" id="CHEBI:33019"/>
        <dbReference type="ChEBI" id="CHEBI:58095"/>
        <dbReference type="ChEBI" id="CHEBI:78442"/>
        <dbReference type="ChEBI" id="CHEBI:78531"/>
        <dbReference type="ChEBI" id="CHEBI:456215"/>
        <dbReference type="EC" id="6.1.1.20"/>
    </reaction>
</comment>
<comment type="cofactor">
    <cofactor evidence="1">
        <name>Mg(2+)</name>
        <dbReference type="ChEBI" id="CHEBI:18420"/>
    </cofactor>
    <text evidence="1">Binds 2 magnesium ions per tetramer.</text>
</comment>
<comment type="subunit">
    <text evidence="1">Tetramer of two alpha and two beta subunits.</text>
</comment>
<comment type="subcellular location">
    <subcellularLocation>
        <location evidence="1">Cytoplasm</location>
    </subcellularLocation>
</comment>
<comment type="similarity">
    <text evidence="1">Belongs to the class-II aminoacyl-tRNA synthetase family. Phe-tRNA synthetase alpha subunit type 1 subfamily.</text>
</comment>
<protein>
    <recommendedName>
        <fullName evidence="1">Phenylalanine--tRNA ligase alpha subunit</fullName>
        <ecNumber evidence="1">6.1.1.20</ecNumber>
    </recommendedName>
    <alternativeName>
        <fullName evidence="1">Phenylalanyl-tRNA synthetase alpha subunit</fullName>
        <shortName evidence="1">PheRS</shortName>
    </alternativeName>
</protein>